<evidence type="ECO:0000255" key="1">
    <source>
        <dbReference type="HAMAP-Rule" id="MF_01350"/>
    </source>
</evidence>
<accession>Q5HB99</accession>
<accession>Q5FEZ9</accession>
<organism>
    <name type="scientific">Ehrlichia ruminantium (strain Welgevonden)</name>
    <dbReference type="NCBI Taxonomy" id="254945"/>
    <lineage>
        <taxon>Bacteria</taxon>
        <taxon>Pseudomonadati</taxon>
        <taxon>Pseudomonadota</taxon>
        <taxon>Alphaproteobacteria</taxon>
        <taxon>Rickettsiales</taxon>
        <taxon>Anaplasmataceae</taxon>
        <taxon>Ehrlichia</taxon>
    </lineage>
</organism>
<gene>
    <name evidence="1" type="primary">nuoH</name>
    <name type="ordered locus">Erum4280</name>
    <name type="ordered locus">ERWE_CDS_04460</name>
</gene>
<reference key="1">
    <citation type="journal article" date="2005" name="Proc. Natl. Acad. Sci. U.S.A.">
        <title>The genome of the heartwater agent Ehrlichia ruminantium contains multiple tandem repeats of actively variable copy number.</title>
        <authorList>
            <person name="Collins N.E."/>
            <person name="Liebenberg J."/>
            <person name="de Villiers E.P."/>
            <person name="Brayton K.A."/>
            <person name="Louw E."/>
            <person name="Pretorius A."/>
            <person name="Faber F.E."/>
            <person name="van Heerden H."/>
            <person name="Josemans A."/>
            <person name="van Kleef M."/>
            <person name="Steyn H.C."/>
            <person name="van Strijp M.F."/>
            <person name="Zweygarth E."/>
            <person name="Jongejan F."/>
            <person name="Maillard J.C."/>
            <person name="Berthier D."/>
            <person name="Botha M."/>
            <person name="Joubert F."/>
            <person name="Corton C.H."/>
            <person name="Thomson N.R."/>
            <person name="Allsopp M.T."/>
            <person name="Allsopp B.A."/>
        </authorList>
    </citation>
    <scope>NUCLEOTIDE SEQUENCE [LARGE SCALE GENOMIC DNA]</scope>
    <source>
        <strain>Welgevonden</strain>
    </source>
</reference>
<reference key="2">
    <citation type="journal article" date="2006" name="J. Bacteriol.">
        <title>Comparative genomic analysis of three strains of Ehrlichia ruminantium reveals an active process of genome size plasticity.</title>
        <authorList>
            <person name="Frutos R."/>
            <person name="Viari A."/>
            <person name="Ferraz C."/>
            <person name="Morgat A."/>
            <person name="Eychenie S."/>
            <person name="Kandassamy Y."/>
            <person name="Chantal I."/>
            <person name="Bensaid A."/>
            <person name="Coissac E."/>
            <person name="Vachiery N."/>
            <person name="Demaille J."/>
            <person name="Martinez D."/>
        </authorList>
    </citation>
    <scope>NUCLEOTIDE SEQUENCE [LARGE SCALE GENOMIC DNA]</scope>
    <source>
        <strain>Welgevonden</strain>
    </source>
</reference>
<comment type="function">
    <text evidence="1">NDH-1 shuttles electrons from NADH, via FMN and iron-sulfur (Fe-S) centers, to quinones in the respiratory chain. The immediate electron acceptor for the enzyme in this species is believed to be ubiquinone. Couples the redox reaction to proton translocation (for every two electrons transferred, four hydrogen ions are translocated across the cytoplasmic membrane), and thus conserves the redox energy in a proton gradient. This subunit may bind ubiquinone.</text>
</comment>
<comment type="catalytic activity">
    <reaction evidence="1">
        <text>a quinone + NADH + 5 H(+)(in) = a quinol + NAD(+) + 4 H(+)(out)</text>
        <dbReference type="Rhea" id="RHEA:57888"/>
        <dbReference type="ChEBI" id="CHEBI:15378"/>
        <dbReference type="ChEBI" id="CHEBI:24646"/>
        <dbReference type="ChEBI" id="CHEBI:57540"/>
        <dbReference type="ChEBI" id="CHEBI:57945"/>
        <dbReference type="ChEBI" id="CHEBI:132124"/>
    </reaction>
</comment>
<comment type="subunit">
    <text evidence="1">NDH-1 is composed of 14 different subunits. Subunits NuoA, H, J, K, L, M, N constitute the membrane sector of the complex.</text>
</comment>
<comment type="subcellular location">
    <subcellularLocation>
        <location evidence="1">Cell inner membrane</location>
        <topology evidence="1">Multi-pass membrane protein</topology>
    </subcellularLocation>
</comment>
<comment type="similarity">
    <text evidence="1">Belongs to the complex I subunit 1 family.</text>
</comment>
<proteinExistence type="inferred from homology"/>
<protein>
    <recommendedName>
        <fullName evidence="1">NADH-quinone oxidoreductase subunit H</fullName>
        <ecNumber evidence="1">7.1.1.-</ecNumber>
    </recommendedName>
    <alternativeName>
        <fullName evidence="1">NADH dehydrogenase I subunit H</fullName>
    </alternativeName>
    <alternativeName>
        <fullName evidence="1">NDH-1 subunit H</fullName>
    </alternativeName>
</protein>
<name>NUOH_EHRRW</name>
<sequence>MHNYNIFLSFYNYISSGVLLFLKIIIVIISVMVSVAYLVYMERKVIAAIQLRQGPSVVGPFGLLQPFADAIKLIIKEPIIPFKANKLCFLIAPVITFTLALLGWAVIPFGSYIIVDNGQELIVPNVIANINIGVLYILAISSLGVYGIIIAGWSSNSNYAFLGAIRSASQMISYEVSIGLTIVTVLLATGSLKLGEIVIARHNMPYWIDLLLLPMAFMFFISALAETNRHPFDLPEAESELVSGYNVEYSSMPFALFFLGEYANMILMSAMAVIFFFGGWYPPLNVSFLYIIPGTIWFIFKIVILLFCFIWIRASIPRYRYDQLMRLGWKVFLPISLFWVILVSGILVYTDSLPKNTLNNTVYYKEN</sequence>
<keyword id="KW-0997">Cell inner membrane</keyword>
<keyword id="KW-1003">Cell membrane</keyword>
<keyword id="KW-0472">Membrane</keyword>
<keyword id="KW-0520">NAD</keyword>
<keyword id="KW-0874">Quinone</keyword>
<keyword id="KW-1278">Translocase</keyword>
<keyword id="KW-0812">Transmembrane</keyword>
<keyword id="KW-1133">Transmembrane helix</keyword>
<keyword id="KW-0830">Ubiquinone</keyword>
<feature type="chain" id="PRO_0000244916" description="NADH-quinone oxidoreductase subunit H">
    <location>
        <begin position="1"/>
        <end position="367"/>
    </location>
</feature>
<feature type="transmembrane region" description="Helical" evidence="1">
    <location>
        <begin position="18"/>
        <end position="38"/>
    </location>
</feature>
<feature type="transmembrane region" description="Helical" evidence="1">
    <location>
        <begin position="87"/>
        <end position="107"/>
    </location>
</feature>
<feature type="transmembrane region" description="Helical" evidence="1">
    <location>
        <begin position="132"/>
        <end position="152"/>
    </location>
</feature>
<feature type="transmembrane region" description="Helical" evidence="1">
    <location>
        <begin position="180"/>
        <end position="200"/>
    </location>
</feature>
<feature type="transmembrane region" description="Helical" evidence="1">
    <location>
        <begin position="204"/>
        <end position="224"/>
    </location>
</feature>
<feature type="transmembrane region" description="Helical" evidence="1">
    <location>
        <begin position="257"/>
        <end position="277"/>
    </location>
</feature>
<feature type="transmembrane region" description="Helical" evidence="1">
    <location>
        <begin position="291"/>
        <end position="311"/>
    </location>
</feature>
<feature type="transmembrane region" description="Helical" evidence="1">
    <location>
        <begin position="328"/>
        <end position="348"/>
    </location>
</feature>
<dbReference type="EC" id="7.1.1.-" evidence="1"/>
<dbReference type="EMBL" id="CR767821">
    <property type="protein sequence ID" value="CAH58154.1"/>
    <property type="molecule type" value="Genomic_DNA"/>
</dbReference>
<dbReference type="EMBL" id="CR925678">
    <property type="protein sequence ID" value="CAI26940.1"/>
    <property type="molecule type" value="Genomic_DNA"/>
</dbReference>
<dbReference type="RefSeq" id="WP_011155112.1">
    <property type="nucleotide sequence ID" value="NC_005295.2"/>
</dbReference>
<dbReference type="SMR" id="Q5HB99"/>
<dbReference type="GeneID" id="33058021"/>
<dbReference type="KEGG" id="eru:Erum4280"/>
<dbReference type="KEGG" id="erw:ERWE_CDS_04460"/>
<dbReference type="eggNOG" id="COG1005">
    <property type="taxonomic scope" value="Bacteria"/>
</dbReference>
<dbReference type="HOGENOM" id="CLU_015134_0_1_5"/>
<dbReference type="Proteomes" id="UP000001021">
    <property type="component" value="Chromosome"/>
</dbReference>
<dbReference type="GO" id="GO:0005886">
    <property type="term" value="C:plasma membrane"/>
    <property type="evidence" value="ECO:0007669"/>
    <property type="project" value="UniProtKB-SubCell"/>
</dbReference>
<dbReference type="GO" id="GO:0003954">
    <property type="term" value="F:NADH dehydrogenase activity"/>
    <property type="evidence" value="ECO:0007669"/>
    <property type="project" value="TreeGrafter"/>
</dbReference>
<dbReference type="GO" id="GO:0016655">
    <property type="term" value="F:oxidoreductase activity, acting on NAD(P)H, quinone or similar compound as acceptor"/>
    <property type="evidence" value="ECO:0007669"/>
    <property type="project" value="UniProtKB-UniRule"/>
</dbReference>
<dbReference type="GO" id="GO:0048038">
    <property type="term" value="F:quinone binding"/>
    <property type="evidence" value="ECO:0007669"/>
    <property type="project" value="UniProtKB-KW"/>
</dbReference>
<dbReference type="GO" id="GO:0009060">
    <property type="term" value="P:aerobic respiration"/>
    <property type="evidence" value="ECO:0007669"/>
    <property type="project" value="TreeGrafter"/>
</dbReference>
<dbReference type="HAMAP" id="MF_01350">
    <property type="entry name" value="NDH1_NuoH"/>
    <property type="match status" value="1"/>
</dbReference>
<dbReference type="InterPro" id="IPR001694">
    <property type="entry name" value="NADH_UbQ_OxRdtase_su1/FPO"/>
</dbReference>
<dbReference type="InterPro" id="IPR018086">
    <property type="entry name" value="NADH_UbQ_OxRdtase_su1_CS"/>
</dbReference>
<dbReference type="NCBIfam" id="NF004741">
    <property type="entry name" value="PRK06076.1-2"/>
    <property type="match status" value="1"/>
</dbReference>
<dbReference type="NCBIfam" id="NF004745">
    <property type="entry name" value="PRK06076.1-6"/>
    <property type="match status" value="1"/>
</dbReference>
<dbReference type="PANTHER" id="PTHR11432">
    <property type="entry name" value="NADH DEHYDROGENASE SUBUNIT 1"/>
    <property type="match status" value="1"/>
</dbReference>
<dbReference type="PANTHER" id="PTHR11432:SF3">
    <property type="entry name" value="NADH-UBIQUINONE OXIDOREDUCTASE CHAIN 1"/>
    <property type="match status" value="1"/>
</dbReference>
<dbReference type="Pfam" id="PF00146">
    <property type="entry name" value="NADHdh"/>
    <property type="match status" value="1"/>
</dbReference>
<dbReference type="PROSITE" id="PS00667">
    <property type="entry name" value="COMPLEX1_ND1_1"/>
    <property type="match status" value="1"/>
</dbReference>
<dbReference type="PROSITE" id="PS00668">
    <property type="entry name" value="COMPLEX1_ND1_2"/>
    <property type="match status" value="1"/>
</dbReference>